<sequence>QPSISDQQVSALPYSDQIQQPLTNQVMPDIVMLQRRWMDRYEIDSLIGKVEQEWVAIKAFLNQAQIEVRHDTEMKYYIVHLKIVDFGSSCQLGQRIVEVLGIPPAHILDQAPKFFEKLPDGTWSLKKLHNILGVETGGPGGRFKDLILRMLDYDPKIQPYYALQHSFFKQETGIAGHPTYQFSANTGPAHYMTEGHLAMR</sequence>
<comment type="function">
    <text evidence="1 2 3 5">Dual-specificity kinase which possesses both serine/threonine and tyrosine kinase activities (PubMed:11311120). Exhibits a substrate preference for proline at position P+1 and arginine at position P-3. Plays an important role in double-strand breaks (DSBs) repair following DNA damage. Mechanistically, phosphorylates RNF169 and increases its ability to block accumulation of TP53BP1 at the DSB sites thereby promoting homologous recombination repair (HRR). Also acts as a positive regulator of transcription by acting as a CTD kinase that mediates phosphorylation of the CTD (C-terminal domain) of the large subunit of RNA polymerase II (RNAP II) POLR2A. May play a role in a signaling pathway regulating nuclear functions of cell proliferation (By similarity). Modulates alternative splicing by phosphorylating the splice factor SRSF6 (By similarity). Has pro-survival function and negatively regulates the apoptotic process. Promotes cell survival upon genotoxic stress through phosphorylation of SIRT1. This in turn inhibits p53/TP53 activity and apoptosis. Phosphorylates SEPTIN4, SEPTIN5 and SF3B1 at 'Thr-434' (By similarity).</text>
</comment>
<comment type="catalytic activity">
    <reaction evidence="5">
        <text>L-tyrosyl-[protein] + ATP = O-phospho-L-tyrosyl-[protein] + ADP + H(+)</text>
        <dbReference type="Rhea" id="RHEA:10596"/>
        <dbReference type="Rhea" id="RHEA-COMP:10136"/>
        <dbReference type="Rhea" id="RHEA-COMP:20101"/>
        <dbReference type="ChEBI" id="CHEBI:15378"/>
        <dbReference type="ChEBI" id="CHEBI:30616"/>
        <dbReference type="ChEBI" id="CHEBI:46858"/>
        <dbReference type="ChEBI" id="CHEBI:61978"/>
        <dbReference type="ChEBI" id="CHEBI:456216"/>
        <dbReference type="EC" id="2.7.12.1"/>
    </reaction>
</comment>
<comment type="catalytic activity">
    <reaction evidence="5">
        <text>L-seryl-[protein] + ATP = O-phospho-L-seryl-[protein] + ADP + H(+)</text>
        <dbReference type="Rhea" id="RHEA:17989"/>
        <dbReference type="Rhea" id="RHEA-COMP:9863"/>
        <dbReference type="Rhea" id="RHEA-COMP:11604"/>
        <dbReference type="ChEBI" id="CHEBI:15378"/>
        <dbReference type="ChEBI" id="CHEBI:29999"/>
        <dbReference type="ChEBI" id="CHEBI:30616"/>
        <dbReference type="ChEBI" id="CHEBI:83421"/>
        <dbReference type="ChEBI" id="CHEBI:456216"/>
        <dbReference type="EC" id="2.7.12.1"/>
    </reaction>
</comment>
<comment type="catalytic activity">
    <reaction evidence="5">
        <text>L-threonyl-[protein] + ATP = O-phospho-L-threonyl-[protein] + ADP + H(+)</text>
        <dbReference type="Rhea" id="RHEA:46608"/>
        <dbReference type="Rhea" id="RHEA-COMP:11060"/>
        <dbReference type="Rhea" id="RHEA-COMP:11605"/>
        <dbReference type="ChEBI" id="CHEBI:15378"/>
        <dbReference type="ChEBI" id="CHEBI:30013"/>
        <dbReference type="ChEBI" id="CHEBI:30616"/>
        <dbReference type="ChEBI" id="CHEBI:61977"/>
        <dbReference type="ChEBI" id="CHEBI:456216"/>
        <dbReference type="EC" id="2.7.12.1"/>
    </reaction>
</comment>
<comment type="catalytic activity">
    <reaction evidence="1">
        <text>[DNA-directed RNA polymerase] + ATP = phospho-[DNA-directed RNA polymerase] + ADP + H(+)</text>
        <dbReference type="Rhea" id="RHEA:10216"/>
        <dbReference type="Rhea" id="RHEA-COMP:11321"/>
        <dbReference type="Rhea" id="RHEA-COMP:11322"/>
        <dbReference type="ChEBI" id="CHEBI:15378"/>
        <dbReference type="ChEBI" id="CHEBI:30616"/>
        <dbReference type="ChEBI" id="CHEBI:43176"/>
        <dbReference type="ChEBI" id="CHEBI:68546"/>
        <dbReference type="ChEBI" id="CHEBI:456216"/>
        <dbReference type="EC" id="2.7.11.23"/>
    </reaction>
    <physiologicalReaction direction="left-to-right" evidence="1">
        <dbReference type="Rhea" id="RHEA:10217"/>
    </physiologicalReaction>
</comment>
<comment type="activity regulation">
    <text evidence="1">Inhibited by RANBP9.</text>
</comment>
<comment type="subunit">
    <text evidence="1 2">Interacts with RAD54L2/ARIP4 (By similarity). Interacts with CRY2 (By similarity). Interacts with RANBP9. Interacts with WDR68 (By similarity). Interacts with SIRT1 (By similarity).</text>
</comment>
<comment type="subcellular location">
    <subcellularLocation>
        <location evidence="5">Nucleus</location>
    </subcellularLocation>
</comment>
<comment type="domain">
    <text evidence="1">The polyhistidine repeats act as targeting signals to nuclear speckles.</text>
</comment>
<comment type="domain">
    <text evidence="1">The histidine-rich domain (HRD) region is intrinsically disordered and promotes the formation of phase-separated liquid droplets that enhance its ability to phosphorylate the CTD (C-terminal domain) of the large subunit of RNA polymerase II (RNA Pol II).</text>
</comment>
<comment type="PTM">
    <text evidence="1 5">Can also autophosphorylate on serine and threonine residues (in vitro) (By similarity). Autophosphorylated on numerous tyrosine residues.</text>
</comment>
<comment type="similarity">
    <text evidence="7">Belongs to the protein kinase superfamily. CMGC Ser/Thr protein kinase family. MNB/DYRK subfamily.</text>
</comment>
<evidence type="ECO:0000250" key="1">
    <source>
        <dbReference type="UniProtKB" id="Q13627"/>
    </source>
</evidence>
<evidence type="ECO:0000250" key="2">
    <source>
        <dbReference type="UniProtKB" id="Q61214"/>
    </source>
</evidence>
<evidence type="ECO:0000250" key="3">
    <source>
        <dbReference type="UniProtKB" id="Q63470"/>
    </source>
</evidence>
<evidence type="ECO:0000255" key="4">
    <source>
        <dbReference type="PROSITE-ProRule" id="PRU00159"/>
    </source>
</evidence>
<evidence type="ECO:0000269" key="5">
    <source>
    </source>
</evidence>
<evidence type="ECO:0000303" key="6">
    <source>
    </source>
</evidence>
<evidence type="ECO:0000305" key="7"/>
<dbReference type="EC" id="2.7.11.23" evidence="1"/>
<dbReference type="EC" id="2.7.12.1" evidence="5"/>
<dbReference type="SMR" id="P85051"/>
<dbReference type="CORUM" id="P85051"/>
<dbReference type="eggNOG" id="KOG0667">
    <property type="taxonomic scope" value="Eukaryota"/>
</dbReference>
<dbReference type="InParanoid" id="P85051"/>
<dbReference type="Proteomes" id="UP000001811">
    <property type="component" value="Unplaced"/>
</dbReference>
<dbReference type="GO" id="GO:0005737">
    <property type="term" value="C:cytoplasm"/>
    <property type="evidence" value="ECO:0000250"/>
    <property type="project" value="UniProtKB"/>
</dbReference>
<dbReference type="GO" id="GO:0016607">
    <property type="term" value="C:nuclear speck"/>
    <property type="evidence" value="ECO:0000250"/>
    <property type="project" value="UniProtKB"/>
</dbReference>
<dbReference type="GO" id="GO:0005634">
    <property type="term" value="C:nucleus"/>
    <property type="evidence" value="ECO:0000314"/>
    <property type="project" value="UniProtKB"/>
</dbReference>
<dbReference type="GO" id="GO:0005524">
    <property type="term" value="F:ATP binding"/>
    <property type="evidence" value="ECO:0007669"/>
    <property type="project" value="UniProtKB-KW"/>
</dbReference>
<dbReference type="GO" id="GO:0106310">
    <property type="term" value="F:protein serine kinase activity"/>
    <property type="evidence" value="ECO:0007669"/>
    <property type="project" value="RHEA"/>
</dbReference>
<dbReference type="GO" id="GO:0004674">
    <property type="term" value="F:protein serine/threonine kinase activity"/>
    <property type="evidence" value="ECO:0000314"/>
    <property type="project" value="UniProtKB"/>
</dbReference>
<dbReference type="GO" id="GO:0004712">
    <property type="term" value="F:protein serine/threonine/tyrosine kinase activity"/>
    <property type="evidence" value="ECO:0007669"/>
    <property type="project" value="UniProtKB-EC"/>
</dbReference>
<dbReference type="GO" id="GO:0004713">
    <property type="term" value="F:protein tyrosine kinase activity"/>
    <property type="evidence" value="ECO:0007669"/>
    <property type="project" value="UniProtKB-KW"/>
</dbReference>
<dbReference type="GO" id="GO:0008353">
    <property type="term" value="F:RNA polymerase II CTD heptapeptide repeat kinase activity"/>
    <property type="evidence" value="ECO:0000250"/>
    <property type="project" value="UniProtKB"/>
</dbReference>
<dbReference type="GO" id="GO:0007623">
    <property type="term" value="P:circadian rhythm"/>
    <property type="evidence" value="ECO:0000250"/>
    <property type="project" value="UniProtKB"/>
</dbReference>
<dbReference type="GO" id="GO:0046777">
    <property type="term" value="P:protein autophosphorylation"/>
    <property type="evidence" value="ECO:0000314"/>
    <property type="project" value="UniProtKB"/>
</dbReference>
<dbReference type="GO" id="GO:0006468">
    <property type="term" value="P:protein phosphorylation"/>
    <property type="evidence" value="ECO:0000314"/>
    <property type="project" value="UniProtKB"/>
</dbReference>
<dbReference type="Gene3D" id="1.10.510.10">
    <property type="entry name" value="Transferase(Phosphotransferase) domain 1"/>
    <property type="match status" value="1"/>
</dbReference>
<feature type="chain" id="PRO_0000271242" description="Dual specificity tyrosine-phosphorylation-regulated kinase 1A">
    <location>
        <begin position="1" status="less than"/>
        <end position="200" status="greater than"/>
    </location>
</feature>
<feature type="binding site" evidence="3 4">
    <location>
        <position position="58"/>
    </location>
    <ligand>
        <name>ATP</name>
        <dbReference type="ChEBI" id="CHEBI:30616"/>
    </ligand>
</feature>
<feature type="modified residue" description="Phosphotyrosine; by autocatalysis" evidence="1">
    <location>
        <position position="41"/>
    </location>
</feature>
<feature type="modified residue" description="Phosphotyrosine; by autocatalysis" evidence="3">
    <location>
        <position position="76"/>
    </location>
</feature>
<feature type="modified residue" description="Phosphoserine; by autocatalysis" evidence="1">
    <location>
        <position position="88"/>
    </location>
</feature>
<feature type="modified residue" description="Phosphothreonine; by autocatalysis" evidence="1">
    <location>
        <position position="122"/>
    </location>
</feature>
<feature type="non-consecutive residues" evidence="6">
    <location>
        <begin position="36"/>
        <end position="37"/>
    </location>
</feature>
<feature type="non-consecutive residues" evidence="6">
    <location>
        <begin position="49"/>
        <end position="50"/>
    </location>
</feature>
<feature type="non-consecutive residues" evidence="6">
    <location>
        <begin position="58"/>
        <end position="59"/>
    </location>
</feature>
<feature type="non-consecutive residues" evidence="6">
    <location>
        <begin position="69"/>
        <end position="70"/>
    </location>
</feature>
<feature type="non-consecutive residues" evidence="6">
    <location>
        <begin position="82"/>
        <end position="83"/>
    </location>
</feature>
<feature type="non-consecutive residues" evidence="6">
    <location>
        <begin position="95"/>
        <end position="96"/>
    </location>
</feature>
<feature type="non-consecutive residues" evidence="6">
    <location>
        <begin position="113"/>
        <end position="114"/>
    </location>
</feature>
<feature type="non-consecutive residues" evidence="6">
    <location>
        <begin position="126"/>
        <end position="127"/>
    </location>
</feature>
<feature type="non-consecutive residues" evidence="6">
    <location>
        <begin position="142"/>
        <end position="143"/>
    </location>
</feature>
<feature type="non-consecutive residues" evidence="6">
    <location>
        <begin position="149"/>
        <end position="150"/>
    </location>
</feature>
<feature type="non-consecutive residues" evidence="6">
    <location>
        <begin position="156"/>
        <end position="157"/>
    </location>
</feature>
<feature type="non-consecutive residues" evidence="6">
    <location>
        <begin position="169"/>
        <end position="170"/>
    </location>
</feature>
<feature type="non-terminal residue" evidence="6">
    <location>
        <position position="1"/>
    </location>
</feature>
<feature type="non-terminal residue" evidence="6">
    <location>
        <position position="200"/>
    </location>
</feature>
<name>DYR1A_RABIT</name>
<protein>
    <recommendedName>
        <fullName>Dual specificity tyrosine-phosphorylation-regulated kinase 1A</fullName>
        <ecNumber evidence="1">2.7.11.23</ecNumber>
        <ecNumber evidence="5">2.7.12.1</ecNumber>
    </recommendedName>
    <alternativeName>
        <fullName>Dual specificity YAK1-related kinase</fullName>
    </alternativeName>
    <alternativeName>
        <fullName>Protein kinase minibrain homolog</fullName>
        <shortName>MNBH</shortName>
    </alternativeName>
    <alternativeName>
        <fullName>RP86</fullName>
    </alternativeName>
</protein>
<organism>
    <name type="scientific">Oryctolagus cuniculus</name>
    <name type="common">Rabbit</name>
    <dbReference type="NCBI Taxonomy" id="9986"/>
    <lineage>
        <taxon>Eukaryota</taxon>
        <taxon>Metazoa</taxon>
        <taxon>Chordata</taxon>
        <taxon>Craniata</taxon>
        <taxon>Vertebrata</taxon>
        <taxon>Euteleostomi</taxon>
        <taxon>Mammalia</taxon>
        <taxon>Eutheria</taxon>
        <taxon>Euarchontoglires</taxon>
        <taxon>Glires</taxon>
        <taxon>Lagomorpha</taxon>
        <taxon>Leporidae</taxon>
        <taxon>Oryctolagus</taxon>
    </lineage>
</organism>
<reference evidence="7" key="1">
    <citation type="journal article" date="2001" name="Biochem. J.">
        <title>The kinase DYRK1A phosphorylates the transcription factor FKHR at Ser329 in vitro, a novel in vivo phosphorylation site.</title>
        <authorList>
            <person name="Woods Y.L."/>
            <person name="Rena G."/>
            <person name="Morrice N."/>
            <person name="Barthel A."/>
            <person name="Becker W."/>
            <person name="Guo S."/>
            <person name="Unterman T.G."/>
            <person name="Cohen P."/>
        </authorList>
    </citation>
    <scope>PROTEIN SEQUENCE</scope>
    <scope>FUNCTION</scope>
    <scope>SUBCELLULAR LOCATION</scope>
    <scope>AUTOPHOSPHORYLATION</scope>
    <source>
        <strain evidence="5">New Zealand white</strain>
        <tissue evidence="5">Skeletal muscle</tissue>
    </source>
</reference>
<keyword id="KW-0067">ATP-binding</keyword>
<keyword id="KW-0903">Direct protein sequencing</keyword>
<keyword id="KW-0418">Kinase</keyword>
<keyword id="KW-0547">Nucleotide-binding</keyword>
<keyword id="KW-0539">Nucleus</keyword>
<keyword id="KW-0597">Phosphoprotein</keyword>
<keyword id="KW-1185">Reference proteome</keyword>
<keyword id="KW-0723">Serine/threonine-protein kinase</keyword>
<keyword id="KW-0804">Transcription</keyword>
<keyword id="KW-0805">Transcription regulation</keyword>
<keyword id="KW-0808">Transferase</keyword>
<keyword id="KW-0829">Tyrosine-protein kinase</keyword>
<gene>
    <name evidence="6" type="primary">DYRK1A</name>
    <name evidence="1" type="synonym">DYRK</name>
</gene>
<accession>P85051</accession>
<proteinExistence type="evidence at protein level"/>